<gene>
    <name evidence="12" type="primary">Caprin2</name>
    <name evidence="12" type="synonym">C1qdc1</name>
    <name evidence="11" type="synonym">Kiaa1873</name>
    <name type="synonym">Rng140</name>
</gene>
<proteinExistence type="evidence at protein level"/>
<organism>
    <name type="scientific">Mus musculus</name>
    <name type="common">Mouse</name>
    <dbReference type="NCBI Taxonomy" id="10090"/>
    <lineage>
        <taxon>Eukaryota</taxon>
        <taxon>Metazoa</taxon>
        <taxon>Chordata</taxon>
        <taxon>Craniata</taxon>
        <taxon>Vertebrata</taxon>
        <taxon>Euteleostomi</taxon>
        <taxon>Mammalia</taxon>
        <taxon>Eutheria</taxon>
        <taxon>Euarchontoglires</taxon>
        <taxon>Glires</taxon>
        <taxon>Rodentia</taxon>
        <taxon>Myomorpha</taxon>
        <taxon>Muroidea</taxon>
        <taxon>Muridae</taxon>
        <taxon>Murinae</taxon>
        <taxon>Mus</taxon>
        <taxon>Mus</taxon>
    </lineage>
</organism>
<keyword id="KW-0025">Alternative splicing</keyword>
<keyword id="KW-0106">Calcium</keyword>
<keyword id="KW-1003">Cell membrane</keyword>
<keyword id="KW-0963">Cytoplasm</keyword>
<keyword id="KW-0221">Differentiation</keyword>
<keyword id="KW-0341">Growth regulation</keyword>
<keyword id="KW-0472">Membrane</keyword>
<keyword id="KW-0479">Metal-binding</keyword>
<keyword id="KW-0597">Phosphoprotein</keyword>
<keyword id="KW-0652">Protein synthesis inhibitor</keyword>
<keyword id="KW-1185">Reference proteome</keyword>
<keyword id="KW-0694">RNA-binding</keyword>
<comment type="function">
    <text evidence="1 6">Promotes phosphorylation of the Wnt coreceptor LRP6, leading to increased activity of the canonical Wnt signaling pathway (By similarity). Facilitates constitutive LRP6 phosphorylation by CDK14/CCNY during G2/M stage of the cell cycle, which may potentiate cells for Wnt signaling (By similarity). May regulate the transport and translation of mRNAs, modulating for instance the expression of proteins involved in synaptic plasticity in neurons (PubMed:20516077). Involved in regulation of growth as erythroblasts shift from a highly proliferative state towards their terminal phase of differentiation (By similarity). May be involved in apoptosis (By similarity).</text>
</comment>
<comment type="subunit">
    <text evidence="1">Homotrimer; via C1q domain. Found in a complex with LRP6, CCNY and CDK14 during G2/M stage; CAPRIN2 functions as a scaffold for the complex by binding to CCNY via its N terminus and to CDK14 via its C terminus. Interacts with LRP5. Interacts with LRP6.</text>
</comment>
<comment type="subcellular location">
    <subcellularLocation>
        <location evidence="1">Cytoplasm</location>
    </subcellularLocation>
    <subcellularLocation>
        <location>Cell membrane</location>
        <topology evidence="1">Peripheral membrane protein</topology>
    </subcellularLocation>
</comment>
<comment type="alternative products">
    <event type="alternative splicing"/>
    <isoform>
        <id>Q05A80-1</id>
        <name evidence="5">1</name>
        <sequence type="displayed"/>
    </isoform>
    <isoform>
        <id>Q05A80-2</id>
        <name evidence="4">2</name>
        <sequence type="described" ref="VSP_052540"/>
    </isoform>
</comment>
<comment type="tissue specificity">
    <text evidence="6">Specifically expressed in brain (at protein level).</text>
</comment>
<comment type="developmental stage">
    <text evidence="6">Detected at 17.5 dpc in brain (at protein level).</text>
</comment>
<comment type="domain">
    <text evidence="1">The C1q domain is essential for the function in Wnt signaling.</text>
</comment>
<comment type="similarity">
    <text evidence="8">Belongs to the caprin family.</text>
</comment>
<comment type="sequence caution" evidence="8">
    <conflict type="erroneous initiation">
        <sequence resource="EMBL-CDS" id="BAC98270"/>
    </conflict>
    <text>Extended N-terminus.</text>
</comment>
<evidence type="ECO:0000250" key="1">
    <source>
        <dbReference type="UniProtKB" id="Q6IMN6"/>
    </source>
</evidence>
<evidence type="ECO:0000255" key="2">
    <source>
        <dbReference type="PROSITE-ProRule" id="PRU00368"/>
    </source>
</evidence>
<evidence type="ECO:0000256" key="3">
    <source>
        <dbReference type="SAM" id="MobiDB-lite"/>
    </source>
</evidence>
<evidence type="ECO:0000269" key="4">
    <source>
    </source>
</evidence>
<evidence type="ECO:0000269" key="5">
    <source>
    </source>
</evidence>
<evidence type="ECO:0000269" key="6">
    <source>
    </source>
</evidence>
<evidence type="ECO:0000303" key="7">
    <source>
    </source>
</evidence>
<evidence type="ECO:0000305" key="8"/>
<evidence type="ECO:0000312" key="9">
    <source>
        <dbReference type="EMBL" id="AAH92093.1"/>
    </source>
</evidence>
<evidence type="ECO:0000312" key="10">
    <source>
        <dbReference type="EMBL" id="AAI25376.1"/>
    </source>
</evidence>
<evidence type="ECO:0000312" key="11">
    <source>
        <dbReference type="EMBL" id="BAC98270.1"/>
    </source>
</evidence>
<evidence type="ECO:0000312" key="12">
    <source>
        <dbReference type="MGI" id="MGI:2448541"/>
    </source>
</evidence>
<evidence type="ECO:0007744" key="13">
    <source>
    </source>
</evidence>
<feature type="chain" id="PRO_0000302083" description="Caprin-2">
    <location>
        <begin position="1"/>
        <end position="1031"/>
    </location>
</feature>
<feature type="domain" description="C1q" evidence="2">
    <location>
        <begin position="897"/>
        <end position="1031"/>
    </location>
</feature>
<feature type="region of interest" description="Disordered" evidence="3">
    <location>
        <begin position="1"/>
        <end position="27"/>
    </location>
</feature>
<feature type="region of interest" description="Disordered" evidence="3">
    <location>
        <begin position="364"/>
        <end position="458"/>
    </location>
</feature>
<feature type="region of interest" description="Disordered" evidence="3">
    <location>
        <begin position="500"/>
        <end position="520"/>
    </location>
</feature>
<feature type="region of interest" description="Disordered" evidence="3">
    <location>
        <begin position="605"/>
        <end position="658"/>
    </location>
</feature>
<feature type="region of interest" description="Disordered" evidence="3">
    <location>
        <begin position="830"/>
        <end position="876"/>
    </location>
</feature>
<feature type="compositionally biased region" description="Polar residues" evidence="3">
    <location>
        <begin position="425"/>
        <end position="439"/>
    </location>
</feature>
<feature type="compositionally biased region" description="Polar residues" evidence="3">
    <location>
        <begin position="446"/>
        <end position="458"/>
    </location>
</feature>
<feature type="compositionally biased region" description="Low complexity" evidence="3">
    <location>
        <begin position="608"/>
        <end position="646"/>
    </location>
</feature>
<feature type="compositionally biased region" description="Polar residues" evidence="3">
    <location>
        <begin position="830"/>
        <end position="853"/>
    </location>
</feature>
<feature type="binding site" evidence="1">
    <location>
        <position position="982"/>
    </location>
    <ligand>
        <name>Ca(2+)</name>
        <dbReference type="ChEBI" id="CHEBI:29108"/>
        <label>1</label>
        <note>ligand shared between two neighboring subunits</note>
    </ligand>
</feature>
<feature type="binding site" evidence="1">
    <location>
        <position position="988"/>
    </location>
    <ligand>
        <name>Ca(2+)</name>
        <dbReference type="ChEBI" id="CHEBI:29108"/>
        <label>2</label>
        <note>ligand shared between two neighboring subunits</note>
    </ligand>
</feature>
<feature type="modified residue" description="Phosphoserine" evidence="13">
    <location>
        <position position="852"/>
    </location>
</feature>
<feature type="modified residue" description="Phosphoserine" evidence="13">
    <location>
        <position position="853"/>
    </location>
</feature>
<feature type="splice variant" id="VSP_052540" description="In isoform 2." evidence="7">
    <location>
        <begin position="284"/>
        <end position="502"/>
    </location>
</feature>
<feature type="sequence conflict" description="In Ref. 1; BAC98270." evidence="8" ref="1">
    <location>
        <position position="843"/>
    </location>
</feature>
<accession>Q05A80</accession>
<accession>Q58E31</accession>
<accession>Q6ZPG7</accession>
<protein>
    <recommendedName>
        <fullName>Caprin-2</fullName>
    </recommendedName>
    <alternativeName>
        <fullName>C1q domain-containing protein 1</fullName>
    </alternativeName>
    <alternativeName>
        <fullName>Cytoplasmic activation/proliferation-associated protein 2</fullName>
    </alternativeName>
    <alternativeName>
        <fullName>RNA granule protein 140</fullName>
    </alternativeName>
</protein>
<sequence>MKSAKSQVNQDQQGENQRALSPLQSTLSSAASPSQAYETYIDNGLICLKHKIRNIEKKKLKLEDYKDRLKNGEQLNPDQLEAVEKYEEVLHNLEFAKELQKTFSALSQDLLKAQKKAQRREHMLKLETEKKKLRTMLQIQYVLQNLTQEHVQKDFKGGLNGAMYLPSKELDYLIKFSKLTCPERNESLSVEDQMEQSSLYFWDLLEGSEKTVVGTTYKHVKDLLSKLLHSGYFESVPVLRNSKEKAEEVLMQSEMKKQLLKSESIKESESLTELVQPEIQPQEFLNRRYMTEVKFSRKQENVEQSWEADYARKPSLLKCWNTLPEPDGQEKKKESLESWKSSLKTQEVSKPVVSLVQGKLRPTLQEEQKQQVPITPVSQWKPESPKSKVGSPQEEQNVQETPKPWVVQSQKEQDPKKLPPGSWAVSVQSEQSGSRSWTTPVCREQASVQPGTPVSWENNAENQKHSLVPQSQISLKSWGAASAGLLPNGQVLTRKLNVEPKDVPKPLPQPIDSSSALPKDPVLRKEKLQDLMSQIQGTYNFMQESVLDFDKPSSAIPSSQPPSACPVSTVSAEQNLSNQSDFLQEPSQASSPVTCSSNACLVTTDQASSGSETEFTTSETPEMVVSPCKPKPASALASPNPPLSKSFQLPPASGSSEAISTAPFQAMQTVFNVNAPLPPRKEQEMKEPPYSSGYNQNFTSSSTQTVSQCQLPAVHIDQTTQPPETGAGYHPDGTVQVSNGSLAFYPAPTSMFPRPAQPFISSRGTLRGCSHGGRLLMSSYQSPGGYKGFDSYRGLPSVSSGNYSQLQLQAREYSGTAYSQRDNFQQCYKRSGTSSGLQANSRAGWSDSSQVSSPERDSETFNSGDSGLGDSRSMTPVDVPVTSPAAAILPVHIYPLPQQMRVAFSAARTSNLAPGTLDQPIVFDLLLNNLGETFDLQLGRFNCPVNGTYVFIFHMLKLAVNVPLYVNLMKNEEVLVSAYANDGAPDHETASNHAVLQLLQGDQIWLRLHRGAIYGSSWKYSTFSGYLLYQD</sequence>
<reference evidence="8 11" key="1">
    <citation type="journal article" date="2003" name="DNA Res.">
        <title>Prediction of the coding sequences of mouse homologues of KIAA gene: III. The complete nucleotide sequences of 500 mouse KIAA-homologous cDNAs identified by screening of terminal sequences of cDNA clones randomly sampled from size-fractionated libraries.</title>
        <authorList>
            <person name="Okazaki N."/>
            <person name="Kikuno R."/>
            <person name="Ohara R."/>
            <person name="Inamoto S."/>
            <person name="Koseki H."/>
            <person name="Hiraoka S."/>
            <person name="Saga Y."/>
            <person name="Nagase T."/>
            <person name="Ohara O."/>
            <person name="Koga H."/>
        </authorList>
    </citation>
    <scope>NUCLEOTIDE SEQUENCE [LARGE SCALE MRNA] (ISOFORM 2)</scope>
    <source>
        <tissue evidence="11">Embryonic tail</tissue>
    </source>
</reference>
<reference evidence="8 10" key="2">
    <citation type="journal article" date="2004" name="Genome Res.">
        <title>The status, quality, and expansion of the NIH full-length cDNA project: the Mammalian Gene Collection (MGC).</title>
        <authorList>
            <consortium name="The MGC Project Team"/>
        </authorList>
    </citation>
    <scope>NUCLEOTIDE SEQUENCE [LARGE SCALE MRNA] (ISOFORM 1)</scope>
    <source>
        <tissue evidence="10">Brain</tissue>
        <tissue evidence="9">Mammary tumor</tissue>
    </source>
</reference>
<reference key="3">
    <citation type="journal article" date="2010" name="Cell">
        <title>A tissue-specific atlas of mouse protein phosphorylation and expression.</title>
        <authorList>
            <person name="Huttlin E.L."/>
            <person name="Jedrychowski M.P."/>
            <person name="Elias J.E."/>
            <person name="Goswami T."/>
            <person name="Rad R."/>
            <person name="Beausoleil S.A."/>
            <person name="Villen J."/>
            <person name="Haas W."/>
            <person name="Sowa M.E."/>
            <person name="Gygi S.P."/>
        </authorList>
    </citation>
    <scope>PHOSPHORYLATION [LARGE SCALE ANALYSIS] AT SER-852 AND SER-853</scope>
    <scope>IDENTIFICATION BY MASS SPECTROMETRY [LARGE SCALE ANALYSIS]</scope>
    <source>
        <tissue>Testis</tissue>
    </source>
</reference>
<reference key="4">
    <citation type="journal article" date="2010" name="J. Biol. Chem.">
        <title>RNA granule protein 140 (RNG140), a paralog of RNG105 localized to distinct RNA granules in neuronal dendrites in the adult vertebrate brain.</title>
        <authorList>
            <person name="Shiina N."/>
            <person name="Tokunaga M."/>
        </authorList>
    </citation>
    <scope>FUNCTION</scope>
    <scope>TISSUE SPECIFICITY</scope>
    <scope>DEVELOPMENTAL STAGE</scope>
</reference>
<name>CAPR2_MOUSE</name>
<dbReference type="EMBL" id="AK129460">
    <property type="protein sequence ID" value="BAC98270.1"/>
    <property type="status" value="ALT_INIT"/>
    <property type="molecule type" value="mRNA"/>
</dbReference>
<dbReference type="EMBL" id="BC092093">
    <property type="protein sequence ID" value="AAH92093.1"/>
    <property type="molecule type" value="mRNA"/>
</dbReference>
<dbReference type="EMBL" id="BC125373">
    <property type="protein sequence ID" value="AAI25374.1"/>
    <property type="molecule type" value="mRNA"/>
</dbReference>
<dbReference type="EMBL" id="BC125375">
    <property type="protein sequence ID" value="AAI25376.1"/>
    <property type="molecule type" value="mRNA"/>
</dbReference>
<dbReference type="CCDS" id="CCDS39720.1">
    <molecule id="Q05A80-1"/>
</dbReference>
<dbReference type="RefSeq" id="NP_001288280.1">
    <property type="nucleotide sequence ID" value="NM_001301351.1"/>
</dbReference>
<dbReference type="RefSeq" id="NP_001398564.1">
    <molecule id="Q05A80-1"/>
    <property type="nucleotide sequence ID" value="NM_001411635.1"/>
</dbReference>
<dbReference type="RefSeq" id="NP_001398566.1">
    <molecule id="Q05A80-2"/>
    <property type="nucleotide sequence ID" value="NM_001411637.1"/>
</dbReference>
<dbReference type="RefSeq" id="NP_853519.2">
    <molecule id="Q05A80-1"/>
    <property type="nucleotide sequence ID" value="NM_181541.4"/>
</dbReference>
<dbReference type="RefSeq" id="XP_006507102.1">
    <molecule id="Q05A80-1"/>
    <property type="nucleotide sequence ID" value="XM_006507039.5"/>
</dbReference>
<dbReference type="RefSeq" id="XP_006507105.1">
    <property type="nucleotide sequence ID" value="XM_006507042.3"/>
</dbReference>
<dbReference type="RefSeq" id="XP_017177051.1">
    <property type="nucleotide sequence ID" value="XM_017321562.1"/>
</dbReference>
<dbReference type="RefSeq" id="XP_030111221.1">
    <molecule id="Q05A80-1"/>
    <property type="nucleotide sequence ID" value="XM_030255361.2"/>
</dbReference>
<dbReference type="SMR" id="Q05A80"/>
<dbReference type="BioGRID" id="231272">
    <property type="interactions" value="2"/>
</dbReference>
<dbReference type="FunCoup" id="Q05A80">
    <property type="interactions" value="3354"/>
</dbReference>
<dbReference type="STRING" id="10090.ENSMUSP00000107195"/>
<dbReference type="GlyGen" id="Q05A80">
    <property type="glycosylation" value="8 sites, 1 O-linked glycan (8 sites)"/>
</dbReference>
<dbReference type="iPTMnet" id="Q05A80"/>
<dbReference type="PhosphoSitePlus" id="Q05A80"/>
<dbReference type="PaxDb" id="10090-ENSMUSP00000107195"/>
<dbReference type="ProteomicsDB" id="273832">
    <molecule id="Q05A80-1"/>
</dbReference>
<dbReference type="ProteomicsDB" id="273833">
    <molecule id="Q05A80-2"/>
</dbReference>
<dbReference type="Antibodypedia" id="42424">
    <property type="antibodies" value="95 antibodies from 20 providers"/>
</dbReference>
<dbReference type="Ensembl" id="ENSMUST00000072324.12">
    <molecule id="Q05A80-2"/>
    <property type="protein sequence ID" value="ENSMUSP00000072165.6"/>
    <property type="gene ID" value="ENSMUSG00000030309.17"/>
</dbReference>
<dbReference type="Ensembl" id="ENSMUST00000111569.9">
    <molecule id="Q05A80-1"/>
    <property type="protein sequence ID" value="ENSMUSP00000107195.3"/>
    <property type="gene ID" value="ENSMUSG00000030309.17"/>
</dbReference>
<dbReference type="GeneID" id="232560"/>
<dbReference type="KEGG" id="mmu:232560"/>
<dbReference type="UCSC" id="uc009eto.2">
    <molecule id="Q05A80-2"/>
    <property type="organism name" value="mouse"/>
</dbReference>
<dbReference type="UCSC" id="uc009etp.2">
    <molecule id="Q05A80-1"/>
    <property type="organism name" value="mouse"/>
</dbReference>
<dbReference type="AGR" id="MGI:2448541"/>
<dbReference type="CTD" id="65981"/>
<dbReference type="MGI" id="MGI:2448541">
    <property type="gene designation" value="Caprin2"/>
</dbReference>
<dbReference type="VEuPathDB" id="HostDB:ENSMUSG00000030309"/>
<dbReference type="eggNOG" id="ENOG502QQ53">
    <property type="taxonomic scope" value="Eukaryota"/>
</dbReference>
<dbReference type="GeneTree" id="ENSGT00940000153438"/>
<dbReference type="HOGENOM" id="CLU_009305_0_0_1"/>
<dbReference type="InParanoid" id="Q05A80"/>
<dbReference type="OMA" id="NHNQHGE"/>
<dbReference type="OrthoDB" id="10062814at2759"/>
<dbReference type="PhylomeDB" id="Q05A80"/>
<dbReference type="TreeFam" id="TF329471"/>
<dbReference type="BioGRID-ORCS" id="232560">
    <property type="hits" value="1 hit in 78 CRISPR screens"/>
</dbReference>
<dbReference type="ChiTaRS" id="Caprin2">
    <property type="organism name" value="mouse"/>
</dbReference>
<dbReference type="PRO" id="PR:Q05A80"/>
<dbReference type="Proteomes" id="UP000000589">
    <property type="component" value="Chromosome 6"/>
</dbReference>
<dbReference type="RNAct" id="Q05A80">
    <property type="molecule type" value="protein"/>
</dbReference>
<dbReference type="Bgee" id="ENSMUSG00000030309">
    <property type="expression patterns" value="Expressed in lens of camera-type eye and 245 other cell types or tissues"/>
</dbReference>
<dbReference type="ExpressionAtlas" id="Q05A80">
    <property type="expression patterns" value="baseline and differential"/>
</dbReference>
<dbReference type="GO" id="GO:0005813">
    <property type="term" value="C:centrosome"/>
    <property type="evidence" value="ECO:0007669"/>
    <property type="project" value="Ensembl"/>
</dbReference>
<dbReference type="GO" id="GO:0005737">
    <property type="term" value="C:cytoplasm"/>
    <property type="evidence" value="ECO:0000250"/>
    <property type="project" value="UniProtKB"/>
</dbReference>
<dbReference type="GO" id="GO:0005829">
    <property type="term" value="C:cytosol"/>
    <property type="evidence" value="ECO:0007669"/>
    <property type="project" value="Ensembl"/>
</dbReference>
<dbReference type="GO" id="GO:0005739">
    <property type="term" value="C:mitochondrion"/>
    <property type="evidence" value="ECO:0000250"/>
    <property type="project" value="UniProtKB"/>
</dbReference>
<dbReference type="GO" id="GO:0005654">
    <property type="term" value="C:nucleoplasm"/>
    <property type="evidence" value="ECO:0007669"/>
    <property type="project" value="Ensembl"/>
</dbReference>
<dbReference type="GO" id="GO:0005886">
    <property type="term" value="C:plasma membrane"/>
    <property type="evidence" value="ECO:0007669"/>
    <property type="project" value="UniProtKB-SubCell"/>
</dbReference>
<dbReference type="GO" id="GO:0046872">
    <property type="term" value="F:metal ion binding"/>
    <property type="evidence" value="ECO:0007669"/>
    <property type="project" value="UniProtKB-KW"/>
</dbReference>
<dbReference type="GO" id="GO:0003723">
    <property type="term" value="F:RNA binding"/>
    <property type="evidence" value="ECO:0007669"/>
    <property type="project" value="UniProtKB-KW"/>
</dbReference>
<dbReference type="GO" id="GO:0030154">
    <property type="term" value="P:cell differentiation"/>
    <property type="evidence" value="ECO:0007669"/>
    <property type="project" value="UniProtKB-KW"/>
</dbReference>
<dbReference type="GO" id="GO:0030308">
    <property type="term" value="P:negative regulation of cell growth"/>
    <property type="evidence" value="ECO:0000250"/>
    <property type="project" value="UniProtKB"/>
</dbReference>
<dbReference type="GO" id="GO:0017148">
    <property type="term" value="P:negative regulation of translation"/>
    <property type="evidence" value="ECO:0007669"/>
    <property type="project" value="UniProtKB-KW"/>
</dbReference>
<dbReference type="GO" id="GO:0050775">
    <property type="term" value="P:positive regulation of dendrite morphogenesis"/>
    <property type="evidence" value="ECO:0000315"/>
    <property type="project" value="UniProtKB"/>
</dbReference>
<dbReference type="GO" id="GO:0061003">
    <property type="term" value="P:positive regulation of dendritic spine morphogenesis"/>
    <property type="evidence" value="ECO:0000315"/>
    <property type="project" value="UniProtKB"/>
</dbReference>
<dbReference type="FunFam" id="2.60.120.40:FF:000003">
    <property type="entry name" value="caprin-2 isoform X1"/>
    <property type="match status" value="1"/>
</dbReference>
<dbReference type="Gene3D" id="2.60.120.40">
    <property type="match status" value="1"/>
</dbReference>
<dbReference type="InterPro" id="IPR001073">
    <property type="entry name" value="C1q_dom"/>
</dbReference>
<dbReference type="InterPro" id="IPR028816">
    <property type="entry name" value="Caprin"/>
</dbReference>
<dbReference type="InterPro" id="IPR022070">
    <property type="entry name" value="Caprin-1_C"/>
</dbReference>
<dbReference type="InterPro" id="IPR041637">
    <property type="entry name" value="Caprin-1_dimer"/>
</dbReference>
<dbReference type="InterPro" id="IPR008983">
    <property type="entry name" value="Tumour_necrosis_fac-like_dom"/>
</dbReference>
<dbReference type="PANTHER" id="PTHR22922:SF5">
    <property type="entry name" value="CAPRIN-2"/>
    <property type="match status" value="1"/>
</dbReference>
<dbReference type="PANTHER" id="PTHR22922">
    <property type="entry name" value="GPI-ANCHORED PROTEIN P137"/>
    <property type="match status" value="1"/>
</dbReference>
<dbReference type="Pfam" id="PF00386">
    <property type="entry name" value="C1q"/>
    <property type="match status" value="1"/>
</dbReference>
<dbReference type="Pfam" id="PF12287">
    <property type="entry name" value="Caprin-1_C"/>
    <property type="match status" value="1"/>
</dbReference>
<dbReference type="Pfam" id="PF18293">
    <property type="entry name" value="Caprin-1_dimer"/>
    <property type="match status" value="1"/>
</dbReference>
<dbReference type="PRINTS" id="PR00007">
    <property type="entry name" value="COMPLEMNTC1Q"/>
</dbReference>
<dbReference type="SMART" id="SM00110">
    <property type="entry name" value="C1Q"/>
    <property type="match status" value="1"/>
</dbReference>
<dbReference type="SUPFAM" id="SSF49842">
    <property type="entry name" value="TNF-like"/>
    <property type="match status" value="1"/>
</dbReference>
<dbReference type="PROSITE" id="PS50871">
    <property type="entry name" value="C1Q"/>
    <property type="match status" value="1"/>
</dbReference>